<name>EFTU_UREU1</name>
<sequence length="394" mass="42918">MAKAKFERTKPHVNIGTIGHVDHGKTTLTAAISTVLAKKGQAIAQSYADVDKTPEERERGITINASHVEYETKTRHYAHVDCPGHADYVKNMITGAAQMDGAILVIAASDGVMAQTKEHILLARQVGVPKIVVFLNKCDFMTDPDMQDLVEMEVRELLTKYGFDGDNTPVIRGSGLKALEGDPVWEAKIDELMDAVDSWIPLPERSTDKPFLLAIEDVFTISGRGTVVTGRVERGTLKVNDEVEIVGLKDTQKTVVTGIEMFRKSLDQAEAGDNAGILLRGIKKEDVERGQVLVKPGSIKPHRTFTAKVYILKKEEGGRHTPIVSGYRPQFYFRTTDVTGAISLPAGVDLVMPGDDVEMTVELIAPVAIEDGSKFSIREGGKTVGHGSVIKTSN</sequence>
<dbReference type="EC" id="3.6.5.3" evidence="2"/>
<dbReference type="EMBL" id="CP001184">
    <property type="protein sequence ID" value="ACI59909.1"/>
    <property type="molecule type" value="Genomic_DNA"/>
</dbReference>
<dbReference type="RefSeq" id="WP_004025523.1">
    <property type="nucleotide sequence ID" value="NC_011374.1"/>
</dbReference>
<dbReference type="SMR" id="B5ZC31"/>
<dbReference type="STRING" id="565575.UUR10_0611"/>
<dbReference type="GeneID" id="93849071"/>
<dbReference type="KEGG" id="uue:UUR10_0611"/>
<dbReference type="eggNOG" id="COG0050">
    <property type="taxonomic scope" value="Bacteria"/>
</dbReference>
<dbReference type="HOGENOM" id="CLU_007265_0_0_14"/>
<dbReference type="OrthoDB" id="9804504at2"/>
<dbReference type="Proteomes" id="UP000002018">
    <property type="component" value="Chromosome"/>
</dbReference>
<dbReference type="GO" id="GO:0005829">
    <property type="term" value="C:cytosol"/>
    <property type="evidence" value="ECO:0007669"/>
    <property type="project" value="TreeGrafter"/>
</dbReference>
<dbReference type="GO" id="GO:0005525">
    <property type="term" value="F:GTP binding"/>
    <property type="evidence" value="ECO:0007669"/>
    <property type="project" value="UniProtKB-UniRule"/>
</dbReference>
<dbReference type="GO" id="GO:0003924">
    <property type="term" value="F:GTPase activity"/>
    <property type="evidence" value="ECO:0007669"/>
    <property type="project" value="InterPro"/>
</dbReference>
<dbReference type="GO" id="GO:0003746">
    <property type="term" value="F:translation elongation factor activity"/>
    <property type="evidence" value="ECO:0007669"/>
    <property type="project" value="UniProtKB-UniRule"/>
</dbReference>
<dbReference type="CDD" id="cd01884">
    <property type="entry name" value="EF_Tu"/>
    <property type="match status" value="1"/>
</dbReference>
<dbReference type="CDD" id="cd03697">
    <property type="entry name" value="EFTU_II"/>
    <property type="match status" value="1"/>
</dbReference>
<dbReference type="CDD" id="cd03707">
    <property type="entry name" value="EFTU_III"/>
    <property type="match status" value="1"/>
</dbReference>
<dbReference type="FunFam" id="2.40.30.10:FF:000001">
    <property type="entry name" value="Elongation factor Tu"/>
    <property type="match status" value="1"/>
</dbReference>
<dbReference type="FunFam" id="3.40.50.300:FF:000003">
    <property type="entry name" value="Elongation factor Tu"/>
    <property type="match status" value="1"/>
</dbReference>
<dbReference type="Gene3D" id="3.40.50.300">
    <property type="entry name" value="P-loop containing nucleotide triphosphate hydrolases"/>
    <property type="match status" value="1"/>
</dbReference>
<dbReference type="Gene3D" id="2.40.30.10">
    <property type="entry name" value="Translation factors"/>
    <property type="match status" value="2"/>
</dbReference>
<dbReference type="HAMAP" id="MF_00118_B">
    <property type="entry name" value="EF_Tu_B"/>
    <property type="match status" value="1"/>
</dbReference>
<dbReference type="InterPro" id="IPR041709">
    <property type="entry name" value="EF-Tu_GTP-bd"/>
</dbReference>
<dbReference type="InterPro" id="IPR050055">
    <property type="entry name" value="EF-Tu_GTPase"/>
</dbReference>
<dbReference type="InterPro" id="IPR004161">
    <property type="entry name" value="EFTu-like_2"/>
</dbReference>
<dbReference type="InterPro" id="IPR033720">
    <property type="entry name" value="EFTU_2"/>
</dbReference>
<dbReference type="InterPro" id="IPR031157">
    <property type="entry name" value="G_TR_CS"/>
</dbReference>
<dbReference type="InterPro" id="IPR027417">
    <property type="entry name" value="P-loop_NTPase"/>
</dbReference>
<dbReference type="InterPro" id="IPR005225">
    <property type="entry name" value="Small_GTP-bd"/>
</dbReference>
<dbReference type="InterPro" id="IPR000795">
    <property type="entry name" value="T_Tr_GTP-bd_dom"/>
</dbReference>
<dbReference type="InterPro" id="IPR009000">
    <property type="entry name" value="Transl_B-barrel_sf"/>
</dbReference>
<dbReference type="InterPro" id="IPR009001">
    <property type="entry name" value="Transl_elong_EF1A/Init_IF2_C"/>
</dbReference>
<dbReference type="InterPro" id="IPR004541">
    <property type="entry name" value="Transl_elong_EFTu/EF1A_bac/org"/>
</dbReference>
<dbReference type="InterPro" id="IPR004160">
    <property type="entry name" value="Transl_elong_EFTu/EF1A_C"/>
</dbReference>
<dbReference type="NCBIfam" id="TIGR00485">
    <property type="entry name" value="EF-Tu"/>
    <property type="match status" value="1"/>
</dbReference>
<dbReference type="NCBIfam" id="NF000766">
    <property type="entry name" value="PRK00049.1"/>
    <property type="match status" value="1"/>
</dbReference>
<dbReference type="NCBIfam" id="NF009372">
    <property type="entry name" value="PRK12735.1"/>
    <property type="match status" value="1"/>
</dbReference>
<dbReference type="NCBIfam" id="NF009373">
    <property type="entry name" value="PRK12736.1"/>
    <property type="match status" value="1"/>
</dbReference>
<dbReference type="NCBIfam" id="TIGR00231">
    <property type="entry name" value="small_GTP"/>
    <property type="match status" value="1"/>
</dbReference>
<dbReference type="PANTHER" id="PTHR43721:SF22">
    <property type="entry name" value="ELONGATION FACTOR TU, MITOCHONDRIAL"/>
    <property type="match status" value="1"/>
</dbReference>
<dbReference type="PANTHER" id="PTHR43721">
    <property type="entry name" value="ELONGATION FACTOR TU-RELATED"/>
    <property type="match status" value="1"/>
</dbReference>
<dbReference type="Pfam" id="PF00009">
    <property type="entry name" value="GTP_EFTU"/>
    <property type="match status" value="1"/>
</dbReference>
<dbReference type="Pfam" id="PF03144">
    <property type="entry name" value="GTP_EFTU_D2"/>
    <property type="match status" value="1"/>
</dbReference>
<dbReference type="Pfam" id="PF03143">
    <property type="entry name" value="GTP_EFTU_D3"/>
    <property type="match status" value="1"/>
</dbReference>
<dbReference type="PRINTS" id="PR00315">
    <property type="entry name" value="ELONGATNFCT"/>
</dbReference>
<dbReference type="SUPFAM" id="SSF50465">
    <property type="entry name" value="EF-Tu/eEF-1alpha/eIF2-gamma C-terminal domain"/>
    <property type="match status" value="1"/>
</dbReference>
<dbReference type="SUPFAM" id="SSF52540">
    <property type="entry name" value="P-loop containing nucleoside triphosphate hydrolases"/>
    <property type="match status" value="1"/>
</dbReference>
<dbReference type="SUPFAM" id="SSF50447">
    <property type="entry name" value="Translation proteins"/>
    <property type="match status" value="1"/>
</dbReference>
<dbReference type="PROSITE" id="PS00301">
    <property type="entry name" value="G_TR_1"/>
    <property type="match status" value="1"/>
</dbReference>
<dbReference type="PROSITE" id="PS51722">
    <property type="entry name" value="G_TR_2"/>
    <property type="match status" value="1"/>
</dbReference>
<accession>B5ZC31</accession>
<reference key="1">
    <citation type="submission" date="2008-10" db="EMBL/GenBank/DDBJ databases">
        <title>Genome sequence of Ureaplasma urealyticum serovar 10 ATCC-33699.</title>
        <authorList>
            <person name="Shrivastava S."/>
            <person name="Methe B.A."/>
            <person name="Glass J."/>
            <person name="White K."/>
            <person name="Duffy L.B."/>
        </authorList>
    </citation>
    <scope>NUCLEOTIDE SEQUENCE [LARGE SCALE GENOMIC DNA]</scope>
    <source>
        <strain>ATCC 33699 / Western</strain>
    </source>
</reference>
<keyword id="KW-0963">Cytoplasm</keyword>
<keyword id="KW-0251">Elongation factor</keyword>
<keyword id="KW-0342">GTP-binding</keyword>
<keyword id="KW-0378">Hydrolase</keyword>
<keyword id="KW-0460">Magnesium</keyword>
<keyword id="KW-0479">Metal-binding</keyword>
<keyword id="KW-0547">Nucleotide-binding</keyword>
<keyword id="KW-0648">Protein biosynthesis</keyword>
<proteinExistence type="inferred from homology"/>
<feature type="chain" id="PRO_1000095096" description="Elongation factor Tu">
    <location>
        <begin position="1"/>
        <end position="394"/>
    </location>
</feature>
<feature type="domain" description="tr-type G">
    <location>
        <begin position="10"/>
        <end position="204"/>
    </location>
</feature>
<feature type="region of interest" description="G1" evidence="1">
    <location>
        <begin position="19"/>
        <end position="26"/>
    </location>
</feature>
<feature type="region of interest" description="G2" evidence="1">
    <location>
        <begin position="60"/>
        <end position="64"/>
    </location>
</feature>
<feature type="region of interest" description="G3" evidence="1">
    <location>
        <begin position="81"/>
        <end position="84"/>
    </location>
</feature>
<feature type="region of interest" description="G4" evidence="1">
    <location>
        <begin position="136"/>
        <end position="139"/>
    </location>
</feature>
<feature type="region of interest" description="G5" evidence="1">
    <location>
        <begin position="174"/>
        <end position="176"/>
    </location>
</feature>
<feature type="binding site" evidence="2">
    <location>
        <begin position="19"/>
        <end position="26"/>
    </location>
    <ligand>
        <name>GTP</name>
        <dbReference type="ChEBI" id="CHEBI:37565"/>
    </ligand>
</feature>
<feature type="binding site" evidence="2">
    <location>
        <position position="26"/>
    </location>
    <ligand>
        <name>Mg(2+)</name>
        <dbReference type="ChEBI" id="CHEBI:18420"/>
    </ligand>
</feature>
<feature type="binding site" evidence="2">
    <location>
        <begin position="81"/>
        <end position="85"/>
    </location>
    <ligand>
        <name>GTP</name>
        <dbReference type="ChEBI" id="CHEBI:37565"/>
    </ligand>
</feature>
<feature type="binding site" evidence="2">
    <location>
        <begin position="136"/>
        <end position="139"/>
    </location>
    <ligand>
        <name>GTP</name>
        <dbReference type="ChEBI" id="CHEBI:37565"/>
    </ligand>
</feature>
<evidence type="ECO:0000250" key="1"/>
<evidence type="ECO:0000255" key="2">
    <source>
        <dbReference type="HAMAP-Rule" id="MF_00118"/>
    </source>
</evidence>
<gene>
    <name evidence="2" type="primary">tuf</name>
    <name type="ordered locus">UUR10_0611</name>
</gene>
<organism>
    <name type="scientific">Ureaplasma urealyticum serovar 10 (strain ATCC 33699 / Western)</name>
    <dbReference type="NCBI Taxonomy" id="565575"/>
    <lineage>
        <taxon>Bacteria</taxon>
        <taxon>Bacillati</taxon>
        <taxon>Mycoplasmatota</taxon>
        <taxon>Mycoplasmoidales</taxon>
        <taxon>Mycoplasmoidaceae</taxon>
        <taxon>Ureaplasma</taxon>
    </lineage>
</organism>
<comment type="function">
    <text evidence="2">GTP hydrolase that promotes the GTP-dependent binding of aminoacyl-tRNA to the A-site of ribosomes during protein biosynthesis.</text>
</comment>
<comment type="catalytic activity">
    <reaction evidence="2">
        <text>GTP + H2O = GDP + phosphate + H(+)</text>
        <dbReference type="Rhea" id="RHEA:19669"/>
        <dbReference type="ChEBI" id="CHEBI:15377"/>
        <dbReference type="ChEBI" id="CHEBI:15378"/>
        <dbReference type="ChEBI" id="CHEBI:37565"/>
        <dbReference type="ChEBI" id="CHEBI:43474"/>
        <dbReference type="ChEBI" id="CHEBI:58189"/>
        <dbReference type="EC" id="3.6.5.3"/>
    </reaction>
    <physiologicalReaction direction="left-to-right" evidence="2">
        <dbReference type="Rhea" id="RHEA:19670"/>
    </physiologicalReaction>
</comment>
<comment type="subunit">
    <text evidence="2">Monomer.</text>
</comment>
<comment type="subcellular location">
    <subcellularLocation>
        <location evidence="2">Cytoplasm</location>
    </subcellularLocation>
</comment>
<comment type="similarity">
    <text evidence="2">Belongs to the TRAFAC class translation factor GTPase superfamily. Classic translation factor GTPase family. EF-Tu/EF-1A subfamily.</text>
</comment>
<protein>
    <recommendedName>
        <fullName evidence="2">Elongation factor Tu</fullName>
        <shortName evidence="2">EF-Tu</shortName>
        <ecNumber evidence="2">3.6.5.3</ecNumber>
    </recommendedName>
</protein>